<reference key="1">
    <citation type="submission" date="2005-03" db="EMBL/GenBank/DDBJ databases">
        <title>Annotation of the Saccharomyces cerevisiae RM11-1a genome.</title>
        <authorList>
            <consortium name="The Broad Institute Genome Sequencing Platform"/>
            <person name="Birren B.W."/>
            <person name="Lander E.S."/>
            <person name="Galagan J.E."/>
            <person name="Nusbaum C."/>
            <person name="Devon K."/>
            <person name="Cuomo C."/>
            <person name="Jaffe D.B."/>
            <person name="Butler J."/>
            <person name="Alvarez P."/>
            <person name="Gnerre S."/>
            <person name="Grabherr M."/>
            <person name="Kleber M."/>
            <person name="Mauceli E.W."/>
            <person name="Brockman W."/>
            <person name="MacCallum I.A."/>
            <person name="Rounsley S."/>
            <person name="Young S.K."/>
            <person name="LaButti K."/>
            <person name="Pushparaj V."/>
            <person name="DeCaprio D."/>
            <person name="Crawford M."/>
            <person name="Koehrsen M."/>
            <person name="Engels R."/>
            <person name="Montgomery P."/>
            <person name="Pearson M."/>
            <person name="Howarth C."/>
            <person name="Larson L."/>
            <person name="Luoma S."/>
            <person name="White J."/>
            <person name="O'Leary S."/>
            <person name="Kodira C.D."/>
            <person name="Zeng Q."/>
            <person name="Yandava C."/>
            <person name="Alvarado L."/>
            <person name="Pratt S."/>
            <person name="Kruglyak L."/>
        </authorList>
    </citation>
    <scope>NUCLEOTIDE SEQUENCE [LARGE SCALE GENOMIC DNA]</scope>
    <source>
        <strain>RM11-1a</strain>
    </source>
</reference>
<feature type="chain" id="PRO_0000408017" description="Glucose transport transcription regulator RGT1">
    <location>
        <begin position="1"/>
        <end position="1170"/>
    </location>
</feature>
<feature type="DNA-binding region" description="Zn(2)-C6 fungal-type" evidence="3">
    <location>
        <begin position="47"/>
        <end position="76"/>
    </location>
</feature>
<feature type="region of interest" description="Disordered" evidence="4">
    <location>
        <begin position="1"/>
        <end position="46"/>
    </location>
</feature>
<feature type="region of interest" description="Disordered" evidence="4">
    <location>
        <begin position="77"/>
        <end position="149"/>
    </location>
</feature>
<feature type="region of interest" description="Disordered" evidence="4">
    <location>
        <begin position="226"/>
        <end position="254"/>
    </location>
</feature>
<feature type="region of interest" description="Disordered" evidence="4">
    <location>
        <begin position="269"/>
        <end position="288"/>
    </location>
</feature>
<feature type="region of interest" description="Disordered" evidence="4">
    <location>
        <begin position="293"/>
        <end position="323"/>
    </location>
</feature>
<feature type="region of interest" description="Disordered" evidence="4">
    <location>
        <begin position="384"/>
        <end position="506"/>
    </location>
</feature>
<feature type="region of interest" description="Disordered" evidence="4">
    <location>
        <begin position="944"/>
        <end position="977"/>
    </location>
</feature>
<feature type="compositionally biased region" description="Polar residues" evidence="4">
    <location>
        <begin position="1"/>
        <end position="22"/>
    </location>
</feature>
<feature type="compositionally biased region" description="Basic and acidic residues" evidence="4">
    <location>
        <begin position="99"/>
        <end position="108"/>
    </location>
</feature>
<feature type="compositionally biased region" description="Low complexity" evidence="4">
    <location>
        <begin position="113"/>
        <end position="138"/>
    </location>
</feature>
<feature type="compositionally biased region" description="Polar residues" evidence="4">
    <location>
        <begin position="139"/>
        <end position="149"/>
    </location>
</feature>
<feature type="compositionally biased region" description="Low complexity" evidence="4">
    <location>
        <begin position="239"/>
        <end position="250"/>
    </location>
</feature>
<feature type="compositionally biased region" description="Basic and acidic residues" evidence="4">
    <location>
        <begin position="271"/>
        <end position="280"/>
    </location>
</feature>
<feature type="compositionally biased region" description="Low complexity" evidence="4">
    <location>
        <begin position="293"/>
        <end position="302"/>
    </location>
</feature>
<feature type="compositionally biased region" description="Low complexity" evidence="4">
    <location>
        <begin position="309"/>
        <end position="323"/>
    </location>
</feature>
<feature type="compositionally biased region" description="Low complexity" evidence="4">
    <location>
        <begin position="385"/>
        <end position="397"/>
    </location>
</feature>
<feature type="compositionally biased region" description="Polar residues" evidence="4">
    <location>
        <begin position="411"/>
        <end position="422"/>
    </location>
</feature>
<feature type="compositionally biased region" description="Low complexity" evidence="4">
    <location>
        <begin position="424"/>
        <end position="444"/>
    </location>
</feature>
<feature type="compositionally biased region" description="Polar residues" evidence="4">
    <location>
        <begin position="445"/>
        <end position="457"/>
    </location>
</feature>
<feature type="compositionally biased region" description="Basic residues" evidence="4">
    <location>
        <begin position="473"/>
        <end position="488"/>
    </location>
</feature>
<feature type="compositionally biased region" description="Polar residues" evidence="4">
    <location>
        <begin position="493"/>
        <end position="506"/>
    </location>
</feature>
<feature type="modified residue" description="Phosphoserine" evidence="2">
    <location>
        <position position="202"/>
    </location>
</feature>
<feature type="modified residue" description="Phosphoserine" evidence="2">
    <location>
        <position position="205"/>
    </location>
</feature>
<feature type="modified residue" description="Phosphoserine" evidence="2">
    <location>
        <position position="208"/>
    </location>
</feature>
<feature type="modified residue" description="Phosphoserine" evidence="2">
    <location>
        <position position="229"/>
    </location>
</feature>
<feature type="modified residue" description="Phosphoserine" evidence="2">
    <location>
        <position position="283"/>
    </location>
</feature>
<feature type="modified residue" description="Phosphoserine" evidence="2">
    <location>
        <position position="284"/>
    </location>
</feature>
<feature type="modified residue" description="Phosphoserine" evidence="2">
    <location>
        <position position="410"/>
    </location>
</feature>
<feature type="modified residue" description="Phosphoserine" evidence="2">
    <location>
        <position position="414"/>
    </location>
</feature>
<feature type="modified residue" description="Phosphoserine" evidence="2">
    <location>
        <position position="1130"/>
    </location>
</feature>
<dbReference type="EMBL" id="CH408051">
    <property type="protein sequence ID" value="EDV13052.1"/>
    <property type="molecule type" value="Genomic_DNA"/>
</dbReference>
<dbReference type="HOGENOM" id="CLU_006525_0_0_1"/>
<dbReference type="OrthoDB" id="39552at4893"/>
<dbReference type="Proteomes" id="UP000008335">
    <property type="component" value="Unassembled WGS sequence"/>
</dbReference>
<dbReference type="GO" id="GO:0005737">
    <property type="term" value="C:cytoplasm"/>
    <property type="evidence" value="ECO:0007669"/>
    <property type="project" value="UniProtKB-SubCell"/>
</dbReference>
<dbReference type="GO" id="GO:0005634">
    <property type="term" value="C:nucleus"/>
    <property type="evidence" value="ECO:0007669"/>
    <property type="project" value="UniProtKB-SubCell"/>
</dbReference>
<dbReference type="GO" id="GO:0003677">
    <property type="term" value="F:DNA binding"/>
    <property type="evidence" value="ECO:0007669"/>
    <property type="project" value="UniProtKB-KW"/>
</dbReference>
<dbReference type="GO" id="GO:0000981">
    <property type="term" value="F:DNA-binding transcription factor activity, RNA polymerase II-specific"/>
    <property type="evidence" value="ECO:0007669"/>
    <property type="project" value="InterPro"/>
</dbReference>
<dbReference type="GO" id="GO:0008270">
    <property type="term" value="F:zinc ion binding"/>
    <property type="evidence" value="ECO:0007669"/>
    <property type="project" value="InterPro"/>
</dbReference>
<dbReference type="CDD" id="cd00067">
    <property type="entry name" value="GAL4"/>
    <property type="match status" value="1"/>
</dbReference>
<dbReference type="Gene3D" id="4.10.240.10">
    <property type="entry name" value="Zn(2)-C6 fungal-type DNA-binding domain"/>
    <property type="match status" value="1"/>
</dbReference>
<dbReference type="InterPro" id="IPR050797">
    <property type="entry name" value="Carb_Metab_Trans_Reg"/>
</dbReference>
<dbReference type="InterPro" id="IPR036864">
    <property type="entry name" value="Zn2-C6_fun-type_DNA-bd_sf"/>
</dbReference>
<dbReference type="InterPro" id="IPR001138">
    <property type="entry name" value="Zn2Cys6_DnaBD"/>
</dbReference>
<dbReference type="PANTHER" id="PTHR31668:SF26">
    <property type="entry name" value="GLUCOSE TRANSPORT TRANSCRIPTION REGULATOR RGT1-RELATED"/>
    <property type="match status" value="1"/>
</dbReference>
<dbReference type="PANTHER" id="PTHR31668">
    <property type="entry name" value="GLUCOSE TRANSPORT TRANSCRIPTION REGULATOR RGT1-RELATED-RELATED"/>
    <property type="match status" value="1"/>
</dbReference>
<dbReference type="Pfam" id="PF00172">
    <property type="entry name" value="Zn_clus"/>
    <property type="match status" value="1"/>
</dbReference>
<dbReference type="SMART" id="SM00066">
    <property type="entry name" value="GAL4"/>
    <property type="match status" value="1"/>
</dbReference>
<dbReference type="SUPFAM" id="SSF57701">
    <property type="entry name" value="Zn2/Cys6 DNA-binding domain"/>
    <property type="match status" value="1"/>
</dbReference>
<dbReference type="PROSITE" id="PS00463">
    <property type="entry name" value="ZN2_CY6_FUNGAL_1"/>
    <property type="match status" value="1"/>
</dbReference>
<dbReference type="PROSITE" id="PS50048">
    <property type="entry name" value="ZN2_CY6_FUNGAL_2"/>
    <property type="match status" value="1"/>
</dbReference>
<proteinExistence type="inferred from homology"/>
<gene>
    <name type="primary">RGT1</name>
    <name type="ORF">SCRG_03981</name>
</gene>
<organism>
    <name type="scientific">Saccharomyces cerevisiae (strain RM11-1a)</name>
    <name type="common">Baker's yeast</name>
    <dbReference type="NCBI Taxonomy" id="285006"/>
    <lineage>
        <taxon>Eukaryota</taxon>
        <taxon>Fungi</taxon>
        <taxon>Dikarya</taxon>
        <taxon>Ascomycota</taxon>
        <taxon>Saccharomycotina</taxon>
        <taxon>Saccharomycetes</taxon>
        <taxon>Saccharomycetales</taxon>
        <taxon>Saccharomycetaceae</taxon>
        <taxon>Saccharomyces</taxon>
    </lineage>
</organism>
<protein>
    <recommendedName>
        <fullName>Glucose transport transcription regulator RGT1</fullName>
    </recommendedName>
    <alternativeName>
        <fullName>Restores glucose transport protein 1</fullName>
    </alternativeName>
</protein>
<name>RGT1_YEAS1</name>
<accession>B3LR49</accession>
<evidence type="ECO:0000250" key="1"/>
<evidence type="ECO:0000250" key="2">
    <source>
        <dbReference type="UniProtKB" id="P32862"/>
    </source>
</evidence>
<evidence type="ECO:0000255" key="3">
    <source>
        <dbReference type="PROSITE-ProRule" id="PRU00227"/>
    </source>
</evidence>
<evidence type="ECO:0000256" key="4">
    <source>
        <dbReference type="SAM" id="MobiDB-lite"/>
    </source>
</evidence>
<evidence type="ECO:0000305" key="5"/>
<sequence length="1170" mass="128240">MNELNTVSTNSSDSTKNGGTSNSPDDMDSAAAASHAIKKRTKASRACDQCRKKKIKCDYKDEKGVCSNCQRNGDRCSFDRVPLKRGPSKGYTRSTSHPRTNEIQDHNNSRSYNTFDNSNNTLNNNTGNSGDNGINSNTVPSTPSRSNSVLLPPLTQYIPQAGGIPPSFQNPAIQSTMPAGNIGQQQFWKVPYHEFQHQRKGSIDSLQSDISVRTLNPNEQLSYNTVQQSPITNKHTNDSGNANGSVTGSGSASGSGGYWSFIRTSGLLAPTDDHNGEQTRRSSSIPSLLRNTSNSLLLGGQPQLPPPQQQSQPQAHQQKLQQGQNLYSYSQFSQQQPYNPSISSFGQFAANGFHSRQGSVASEAMSPSAPAMFTSTSTNPVNVAQQTQRPQGQQVPQFSSELDGNKRRQSAPVSVTLSTDRLNGNENNNGEINNNNGSNNSGSSKDTSQHSQESVTTPAALEASSPGSTPQRSTKKRRKSYVSKKTKPKRDSSISITSKDSAHPMTTSSTIAYGQISDVDLIDTYYEFIHVGFPIIPLNKTTLTSDLLLVNTQPISNIHEVNSYVILWFRNSLELLVRVALKQKPGGKFFDNIVGVALSPSNDNNKAGFTTATARDDAEKTRRDSHNEVQDTLEVQSVFIAALNECFQKIVDIHPKFRENNDQISPKIKVIYLSTFILLNYILAFVGYDNSFVLGMSVTIFNEFKLYKLLLFPEPDINDVKPPVDEEVSTGNGNTKTSEFEIGSESAGHMNPSNSPNSMDENISHYSVLFKRLYVLLSVFDSLQSCAFGGPKLLNISIQGSTERFFSNDLGSKWCLEQSQLRLKSVLQSLKLGELMSELTRNRISMNGNRKPGFDITNSSSLLSEYVETQPLSVAQLFCKLLIGKHNFINCLLSLYDSEAGVYSDLTLDLSSKIADSLCSLISIILQVLTLILRLNPTNSIDFNYRPPNPPANNPTVQEGPSAMGSSPVAGNLSAAPPSEGNPDFYKKLLGLKQDTGTILSDLCRGIISPFAIAILHEVYNITELVKQMPTSLISIMMTATTTQNTQDTKKSQDLVMKLSNSMNEVVQITSVLTMIKPFKIFEHELNKPIMSLTGGLSSTTRNDVMWPKSGQGLRESSVMKTLLDERRTSGTQPTTAPVAAEEPRLENVALENFVSIGWKLLDDSELGWY</sequence>
<keyword id="KW-0010">Activator</keyword>
<keyword id="KW-0963">Cytoplasm</keyword>
<keyword id="KW-0238">DNA-binding</keyword>
<keyword id="KW-0479">Metal-binding</keyword>
<keyword id="KW-0539">Nucleus</keyword>
<keyword id="KW-0597">Phosphoprotein</keyword>
<keyword id="KW-0678">Repressor</keyword>
<keyword id="KW-0804">Transcription</keyword>
<keyword id="KW-0805">Transcription regulation</keyword>
<keyword id="KW-0862">Zinc</keyword>
<comment type="function">
    <text evidence="1">Glucose-responsive transcription factor that regulates expression of several glucose transporter (HXT) genes in response to glucose. In the absence of glucose, it functions as a transcriptional repressor, whereas high concentrations of glucose cause it to function as a transcriptional activator. In cells growing on low levels of glucose, has a neutral role, neither repressing nor activating transcription. Binds the consensus binding site sequence 5'-CGGANNA-3', of which multiple copies are present in all HXT promoters regulated by RGT1 (By similarity).</text>
</comment>
<comment type="subcellular location">
    <subcellularLocation>
        <location evidence="3">Nucleus</location>
    </subcellularLocation>
    <subcellularLocation>
        <location evidence="1">Cytoplasm</location>
    </subcellularLocation>
</comment>
<comment type="PTM">
    <text evidence="1">Glucose-induced phosphorylation regulates the DNA-binding activity. Hyperphosphorylation in cells growing on high levels of glucose does prevents DNA-binding and dephosphorylation restores DNA-binding ability (By similarity).</text>
</comment>
<comment type="similarity">
    <text evidence="5">Belongs to the EDS1/RGT1 family.</text>
</comment>